<dbReference type="EMBL" id="AE017283">
    <property type="protein sequence ID" value="AAT83163.1"/>
    <property type="molecule type" value="Genomic_DNA"/>
</dbReference>
<dbReference type="RefSeq" id="WP_002514222.1">
    <property type="nucleotide sequence ID" value="NZ_CP025935.1"/>
</dbReference>
<dbReference type="PDB" id="8CRX">
    <property type="method" value="EM"/>
    <property type="resolution" value="2.78 A"/>
    <property type="chains" value="2=1-68"/>
</dbReference>
<dbReference type="PDB" id="8CVM">
    <property type="method" value="EM"/>
    <property type="resolution" value="2.66 A"/>
    <property type="chains" value="2=1-68"/>
</dbReference>
<dbReference type="PDB" id="9C4G">
    <property type="method" value="EM"/>
    <property type="resolution" value="2.53 A"/>
    <property type="chains" value="2=1-68"/>
</dbReference>
<dbReference type="PDBsum" id="8CRX"/>
<dbReference type="PDBsum" id="8CVM"/>
<dbReference type="PDBsum" id="9C4G"/>
<dbReference type="EMDB" id="EMD-45185"/>
<dbReference type="SMR" id="Q6A7V2"/>
<dbReference type="EnsemblBacteria" id="AAT83163">
    <property type="protein sequence ID" value="AAT83163"/>
    <property type="gene ID" value="PPA1413"/>
</dbReference>
<dbReference type="GeneID" id="92879954"/>
<dbReference type="KEGG" id="pac:PPA1413"/>
<dbReference type="eggNOG" id="COG0291">
    <property type="taxonomic scope" value="Bacteria"/>
</dbReference>
<dbReference type="HOGENOM" id="CLU_169643_4_2_11"/>
<dbReference type="Proteomes" id="UP000000603">
    <property type="component" value="Chromosome"/>
</dbReference>
<dbReference type="GO" id="GO:0022625">
    <property type="term" value="C:cytosolic large ribosomal subunit"/>
    <property type="evidence" value="ECO:0007669"/>
    <property type="project" value="TreeGrafter"/>
</dbReference>
<dbReference type="GO" id="GO:0003735">
    <property type="term" value="F:structural constituent of ribosome"/>
    <property type="evidence" value="ECO:0007669"/>
    <property type="project" value="InterPro"/>
</dbReference>
<dbReference type="GO" id="GO:0006412">
    <property type="term" value="P:translation"/>
    <property type="evidence" value="ECO:0007669"/>
    <property type="project" value="UniProtKB-UniRule"/>
</dbReference>
<dbReference type="FunFam" id="4.10.410.60:FF:000001">
    <property type="entry name" value="50S ribosomal protein L35"/>
    <property type="match status" value="1"/>
</dbReference>
<dbReference type="Gene3D" id="4.10.410.60">
    <property type="match status" value="1"/>
</dbReference>
<dbReference type="HAMAP" id="MF_00514">
    <property type="entry name" value="Ribosomal_bL35"/>
    <property type="match status" value="1"/>
</dbReference>
<dbReference type="InterPro" id="IPR001706">
    <property type="entry name" value="Ribosomal_bL35"/>
</dbReference>
<dbReference type="InterPro" id="IPR021137">
    <property type="entry name" value="Ribosomal_bL35-like"/>
</dbReference>
<dbReference type="InterPro" id="IPR037229">
    <property type="entry name" value="Ribosomal_bL35_sf"/>
</dbReference>
<dbReference type="NCBIfam" id="TIGR00001">
    <property type="entry name" value="rpmI_bact"/>
    <property type="match status" value="1"/>
</dbReference>
<dbReference type="PANTHER" id="PTHR33343">
    <property type="entry name" value="54S RIBOSOMAL PROTEIN BL35M"/>
    <property type="match status" value="1"/>
</dbReference>
<dbReference type="PANTHER" id="PTHR33343:SF1">
    <property type="entry name" value="LARGE RIBOSOMAL SUBUNIT PROTEIN BL35M"/>
    <property type="match status" value="1"/>
</dbReference>
<dbReference type="Pfam" id="PF01632">
    <property type="entry name" value="Ribosomal_L35p"/>
    <property type="match status" value="1"/>
</dbReference>
<dbReference type="PRINTS" id="PR00064">
    <property type="entry name" value="RIBOSOMALL35"/>
</dbReference>
<dbReference type="SUPFAM" id="SSF143034">
    <property type="entry name" value="L35p-like"/>
    <property type="match status" value="1"/>
</dbReference>
<comment type="similarity">
    <text evidence="1">Belongs to the bacterial ribosomal protein bL35 family.</text>
</comment>
<sequence length="68" mass="7434">MPKMKSHSGTKKRFKVTGSGKVTARKAGKRHLNEHKSSRVTRRLTGETVLSKGEAAKVKKLLAGHPGR</sequence>
<gene>
    <name evidence="1" type="primary">rpmI</name>
    <name type="ordered locus">PPA1413</name>
</gene>
<feature type="chain" id="PRO_0000177398" description="Large ribosomal subunit protein bL35">
    <location>
        <begin position="1"/>
        <end position="68"/>
    </location>
</feature>
<feature type="region of interest" description="Disordered" evidence="2">
    <location>
        <begin position="1"/>
        <end position="38"/>
    </location>
</feature>
<feature type="compositionally biased region" description="Basic residues" evidence="2">
    <location>
        <begin position="1"/>
        <end position="15"/>
    </location>
</feature>
<feature type="compositionally biased region" description="Basic residues" evidence="2">
    <location>
        <begin position="23"/>
        <end position="38"/>
    </location>
</feature>
<feature type="helix" evidence="4">
    <location>
        <begin position="8"/>
        <end position="13"/>
    </location>
</feature>
<feature type="strand" evidence="4">
    <location>
        <begin position="14"/>
        <end position="16"/>
    </location>
</feature>
<feature type="strand" evidence="4">
    <location>
        <begin position="22"/>
        <end position="25"/>
    </location>
</feature>
<feature type="strand" evidence="4">
    <location>
        <begin position="34"/>
        <end position="36"/>
    </location>
</feature>
<feature type="helix" evidence="4">
    <location>
        <begin position="38"/>
        <end position="44"/>
    </location>
</feature>
<feature type="strand" evidence="4">
    <location>
        <begin position="45"/>
        <end position="49"/>
    </location>
</feature>
<feature type="helix" evidence="4">
    <location>
        <begin position="52"/>
        <end position="61"/>
    </location>
</feature>
<organism>
    <name type="scientific">Cutibacterium acnes (strain DSM 16379 / KPA171202)</name>
    <name type="common">Propionibacterium acnes</name>
    <dbReference type="NCBI Taxonomy" id="267747"/>
    <lineage>
        <taxon>Bacteria</taxon>
        <taxon>Bacillati</taxon>
        <taxon>Actinomycetota</taxon>
        <taxon>Actinomycetes</taxon>
        <taxon>Propionibacteriales</taxon>
        <taxon>Propionibacteriaceae</taxon>
        <taxon>Cutibacterium</taxon>
    </lineage>
</organism>
<protein>
    <recommendedName>
        <fullName evidence="1">Large ribosomal subunit protein bL35</fullName>
    </recommendedName>
    <alternativeName>
        <fullName evidence="3">50S ribosomal protein L35</fullName>
    </alternativeName>
</protein>
<keyword id="KW-0002">3D-structure</keyword>
<keyword id="KW-0687">Ribonucleoprotein</keyword>
<keyword id="KW-0689">Ribosomal protein</keyword>
<proteinExistence type="evidence at protein level"/>
<name>RL35_CUTAK</name>
<evidence type="ECO:0000255" key="1">
    <source>
        <dbReference type="HAMAP-Rule" id="MF_00514"/>
    </source>
</evidence>
<evidence type="ECO:0000256" key="2">
    <source>
        <dbReference type="SAM" id="MobiDB-lite"/>
    </source>
</evidence>
<evidence type="ECO:0000305" key="3"/>
<evidence type="ECO:0007829" key="4">
    <source>
        <dbReference type="PDB" id="8CVM"/>
    </source>
</evidence>
<reference key="1">
    <citation type="journal article" date="2004" name="Science">
        <title>The complete genome sequence of Propionibacterium acnes, a commensal of human skin.</title>
        <authorList>
            <person name="Brueggemann H."/>
            <person name="Henne A."/>
            <person name="Hoster F."/>
            <person name="Liesegang H."/>
            <person name="Wiezer A."/>
            <person name="Strittmatter A."/>
            <person name="Hujer S."/>
            <person name="Duerre P."/>
            <person name="Gottschalk G."/>
        </authorList>
    </citation>
    <scope>NUCLEOTIDE SEQUENCE [LARGE SCALE GENOMIC DNA]</scope>
    <source>
        <strain>DSM 16379 / KPA171202</strain>
    </source>
</reference>
<accession>Q6A7V2</accession>